<dbReference type="EC" id="1.4.1.4" evidence="3"/>
<dbReference type="EMBL" id="CP000561">
    <property type="protein sequence ID" value="ABO09023.1"/>
    <property type="molecule type" value="Genomic_DNA"/>
</dbReference>
<dbReference type="RefSeq" id="WP_011850281.1">
    <property type="nucleotide sequence ID" value="NC_009073.1"/>
</dbReference>
<dbReference type="SMR" id="A3MWK6"/>
<dbReference type="STRING" id="410359.Pcal_1606"/>
<dbReference type="GeneID" id="4909211"/>
<dbReference type="KEGG" id="pcl:Pcal_1606"/>
<dbReference type="eggNOG" id="arCOG01352">
    <property type="taxonomic scope" value="Archaea"/>
</dbReference>
<dbReference type="HOGENOM" id="CLU_025763_1_2_2"/>
<dbReference type="OrthoDB" id="6425at2157"/>
<dbReference type="BRENDA" id="1.4.1.4">
    <property type="organism ID" value="7282"/>
</dbReference>
<dbReference type="Proteomes" id="UP000001431">
    <property type="component" value="Chromosome"/>
</dbReference>
<dbReference type="GO" id="GO:0004352">
    <property type="term" value="F:glutamate dehydrogenase (NAD+) activity"/>
    <property type="evidence" value="ECO:0007669"/>
    <property type="project" value="TreeGrafter"/>
</dbReference>
<dbReference type="GO" id="GO:0004354">
    <property type="term" value="F:glutamate dehydrogenase (NADP+) activity"/>
    <property type="evidence" value="ECO:0000314"/>
    <property type="project" value="UniProtKB"/>
</dbReference>
<dbReference type="GO" id="GO:0070401">
    <property type="term" value="F:NADP+ binding"/>
    <property type="evidence" value="ECO:0000314"/>
    <property type="project" value="UniProtKB"/>
</dbReference>
<dbReference type="GO" id="GO:0070402">
    <property type="term" value="F:NADPH binding"/>
    <property type="evidence" value="ECO:0000314"/>
    <property type="project" value="UniProtKB"/>
</dbReference>
<dbReference type="GO" id="GO:0006103">
    <property type="term" value="P:2-oxoglutarate metabolic process"/>
    <property type="evidence" value="ECO:0000314"/>
    <property type="project" value="UniProtKB"/>
</dbReference>
<dbReference type="GO" id="GO:0006538">
    <property type="term" value="P:glutamate catabolic process"/>
    <property type="evidence" value="ECO:0007669"/>
    <property type="project" value="TreeGrafter"/>
</dbReference>
<dbReference type="GO" id="GO:0006536">
    <property type="term" value="P:glutamate metabolic process"/>
    <property type="evidence" value="ECO:0000314"/>
    <property type="project" value="UniProtKB"/>
</dbReference>
<dbReference type="CDD" id="cd01076">
    <property type="entry name" value="NAD_bind_1_Glu_DH"/>
    <property type="match status" value="1"/>
</dbReference>
<dbReference type="FunFam" id="3.40.50.720:FF:001273">
    <property type="entry name" value="Glutamate dehydrogenase"/>
    <property type="match status" value="1"/>
</dbReference>
<dbReference type="Gene3D" id="3.40.50.10860">
    <property type="entry name" value="Leucine Dehydrogenase, chain A, domain 1"/>
    <property type="match status" value="1"/>
</dbReference>
<dbReference type="Gene3D" id="3.40.50.720">
    <property type="entry name" value="NAD(P)-binding Rossmann-like Domain"/>
    <property type="match status" value="1"/>
</dbReference>
<dbReference type="InterPro" id="IPR046346">
    <property type="entry name" value="Aminoacid_DH-like_N_sf"/>
</dbReference>
<dbReference type="InterPro" id="IPR006095">
    <property type="entry name" value="Glu/Leu/Phe/Val/Trp_DH"/>
</dbReference>
<dbReference type="InterPro" id="IPR006096">
    <property type="entry name" value="Glu/Leu/Phe/Val/Trp_DH_C"/>
</dbReference>
<dbReference type="InterPro" id="IPR006097">
    <property type="entry name" value="Glu/Leu/Phe/Val/Trp_DH_dimer"/>
</dbReference>
<dbReference type="InterPro" id="IPR014362">
    <property type="entry name" value="Glu_DH"/>
</dbReference>
<dbReference type="InterPro" id="IPR036291">
    <property type="entry name" value="NAD(P)-bd_dom_sf"/>
</dbReference>
<dbReference type="InterPro" id="IPR033922">
    <property type="entry name" value="NAD_bind_Glu_DH"/>
</dbReference>
<dbReference type="PANTHER" id="PTHR11606">
    <property type="entry name" value="GLUTAMATE DEHYDROGENASE"/>
    <property type="match status" value="1"/>
</dbReference>
<dbReference type="PANTHER" id="PTHR11606:SF13">
    <property type="entry name" value="GLUTAMATE DEHYDROGENASE 1, MITOCHONDRIAL"/>
    <property type="match status" value="1"/>
</dbReference>
<dbReference type="Pfam" id="PF00208">
    <property type="entry name" value="ELFV_dehydrog"/>
    <property type="match status" value="1"/>
</dbReference>
<dbReference type="Pfam" id="PF02812">
    <property type="entry name" value="ELFV_dehydrog_N"/>
    <property type="match status" value="1"/>
</dbReference>
<dbReference type="PIRSF" id="PIRSF000185">
    <property type="entry name" value="Glu_DH"/>
    <property type="match status" value="1"/>
</dbReference>
<dbReference type="PRINTS" id="PR00082">
    <property type="entry name" value="GLFDHDRGNASE"/>
</dbReference>
<dbReference type="SMART" id="SM00839">
    <property type="entry name" value="ELFV_dehydrog"/>
    <property type="match status" value="1"/>
</dbReference>
<dbReference type="SUPFAM" id="SSF53223">
    <property type="entry name" value="Aminoacid dehydrogenase-like, N-terminal domain"/>
    <property type="match status" value="1"/>
</dbReference>
<dbReference type="SUPFAM" id="SSF51735">
    <property type="entry name" value="NAD(P)-binding Rossmann-fold domains"/>
    <property type="match status" value="1"/>
</dbReference>
<reference key="1">
    <citation type="submission" date="2007-02" db="EMBL/GenBank/DDBJ databases">
        <title>Complete sequence of Pyrobaculum calidifontis JCM 11548.</title>
        <authorList>
            <consortium name="US DOE Joint Genome Institute"/>
            <person name="Copeland A."/>
            <person name="Lucas S."/>
            <person name="Lapidus A."/>
            <person name="Barry K."/>
            <person name="Glavina del Rio T."/>
            <person name="Dalin E."/>
            <person name="Tice H."/>
            <person name="Pitluck S."/>
            <person name="Chain P."/>
            <person name="Malfatti S."/>
            <person name="Shin M."/>
            <person name="Vergez L."/>
            <person name="Schmutz J."/>
            <person name="Larimer F."/>
            <person name="Land M."/>
            <person name="Hauser L."/>
            <person name="Kyrpides N."/>
            <person name="Mikhailova N."/>
            <person name="Cozen A.E."/>
            <person name="Fitz-Gibbon S.T."/>
            <person name="House C.H."/>
            <person name="Saltikov C."/>
            <person name="Lowe T.M."/>
            <person name="Richardson P."/>
        </authorList>
    </citation>
    <scope>NUCLEOTIDE SEQUENCE [LARGE SCALE GENOMIC DNA]</scope>
    <source>
        <strain>DSM 21063 / JCM 11548 / VA1</strain>
    </source>
</reference>
<reference key="2">
    <citation type="journal article" date="2013" name="Extremophiles">
        <title>Biochemical characterization of two glutamate dehydrogenases with different cofactor specificities from a hyperthermophilic archaeon Pyrobaculum calidifontis.</title>
        <authorList>
            <person name="Wakamatsu T."/>
            <person name="Higashi C."/>
            <person name="Ohmori T."/>
            <person name="Doi K."/>
            <person name="Ohshima T."/>
        </authorList>
    </citation>
    <scope>FUNCTION</scope>
    <scope>CATALYTIC ACTIVITY</scope>
    <scope>SUBSTRATE SPECIFICITY</scope>
    <scope>BIOPHYSICOCHEMICAL PROPERTIES</scope>
    <scope>ACTIVITY REGULATION</scope>
    <scope>SUBUNIT</scope>
    <scope>INDUCTION</scope>
    <source>
        <strain>DSM 21063 / JCM 11548 / VA1</strain>
    </source>
</reference>
<accession>A3MWK6</accession>
<protein>
    <recommendedName>
        <fullName evidence="4">NADP(+)-dependent glutamate dehydrogenase</fullName>
        <shortName>NADP-GDH</shortName>
        <ecNumber evidence="3">1.4.1.4</ecNumber>
    </recommendedName>
</protein>
<organism>
    <name type="scientific">Pyrobaculum calidifontis (strain DSM 21063 / JCM 11548 / VA1)</name>
    <dbReference type="NCBI Taxonomy" id="410359"/>
    <lineage>
        <taxon>Archaea</taxon>
        <taxon>Thermoproteota</taxon>
        <taxon>Thermoprotei</taxon>
        <taxon>Thermoproteales</taxon>
        <taxon>Thermoproteaceae</taxon>
        <taxon>Pyrobaculum</taxon>
    </lineage>
</organism>
<keyword id="KW-0521">NADP</keyword>
<keyword id="KW-0560">Oxidoreductase</keyword>
<name>DHE4_PYRCJ</name>
<proteinExistence type="evidence at protein level"/>
<gene>
    <name evidence="6" type="ordered locus">Pcal_1606</name>
</gene>
<feature type="chain" id="PRO_0000432228" description="NADP(+)-dependent glutamate dehydrogenase">
    <location>
        <begin position="1"/>
        <end position="421"/>
    </location>
</feature>
<feature type="active site" description="Proton donor" evidence="2">
    <location>
        <position position="106"/>
    </location>
</feature>
<feature type="binding site" evidence="2">
    <location>
        <position position="70"/>
    </location>
    <ligand>
        <name>substrate</name>
    </ligand>
</feature>
<feature type="binding site" evidence="2">
    <location>
        <position position="94"/>
    </location>
    <ligand>
        <name>substrate</name>
    </ligand>
</feature>
<feature type="binding site" evidence="2">
    <location>
        <position position="190"/>
    </location>
    <ligand>
        <name>NADP(+)</name>
        <dbReference type="ChEBI" id="CHEBI:58349"/>
    </ligand>
</feature>
<feature type="binding site" evidence="2">
    <location>
        <position position="221"/>
    </location>
    <ligand>
        <name>NADP(+)</name>
        <dbReference type="ChEBI" id="CHEBI:58349"/>
    </ligand>
</feature>
<feature type="binding site" evidence="2">
    <location>
        <position position="354"/>
    </location>
    <ligand>
        <name>substrate</name>
    </ligand>
</feature>
<feature type="site" description="Important for catalysis" evidence="1">
    <location>
        <position position="146"/>
    </location>
</feature>
<evidence type="ECO:0000250" key="1"/>
<evidence type="ECO:0000250" key="2">
    <source>
        <dbReference type="UniProtKB" id="P24295"/>
    </source>
</evidence>
<evidence type="ECO:0000269" key="3">
    <source>
    </source>
</evidence>
<evidence type="ECO:0000303" key="4">
    <source>
    </source>
</evidence>
<evidence type="ECO:0000305" key="5"/>
<evidence type="ECO:0000312" key="6">
    <source>
        <dbReference type="EMBL" id="ABO09023.1"/>
    </source>
</evidence>
<comment type="function">
    <text evidence="3">Catalyzes the reversible oxidative deamination of L-glutamate to 2-oxoglutarate and ammonia, thereby playing a key role at the intersection of the carbon and nitrogen metabolic pathways. Shows a high preference for NADP(+)/NADPH as the acceptor/donor over NAD(+)/NADH. May function in vivo in the synthetic direction. Also catalyzes at very low rates the oxidative deamination of L-2-aminobutyrate, and the reductive amination of 2-oxovalerate and 2-oxobutyrate.</text>
</comment>
<comment type="catalytic activity">
    <reaction evidence="3">
        <text>L-glutamate + NADP(+) + H2O = 2-oxoglutarate + NH4(+) + NADPH + H(+)</text>
        <dbReference type="Rhea" id="RHEA:11612"/>
        <dbReference type="ChEBI" id="CHEBI:15377"/>
        <dbReference type="ChEBI" id="CHEBI:15378"/>
        <dbReference type="ChEBI" id="CHEBI:16810"/>
        <dbReference type="ChEBI" id="CHEBI:28938"/>
        <dbReference type="ChEBI" id="CHEBI:29985"/>
        <dbReference type="ChEBI" id="CHEBI:57783"/>
        <dbReference type="ChEBI" id="CHEBI:58349"/>
        <dbReference type="EC" id="1.4.1.4"/>
    </reaction>
</comment>
<comment type="activity regulation">
    <text evidence="3">Is not regulated allosterically. Activity is inhibited in the presence of high ionic strength; the inhibitory effect of KCl is slightly higher than that of NaCl.</text>
</comment>
<comment type="biophysicochemical properties">
    <kinetics>
        <KM evidence="3">0.035 mM for NADP(+) (at 50 degrees Celsius)</KM>
        <KM evidence="3">3.4 mM for L-glutamate (at 50 degrees Celsius)</KM>
        <KM evidence="3">0.017 mM for NADPH (at 50 degrees Celsius)</KM>
        <KM evidence="3">1.7 mM for 2-oxoglutarate (at 50 degrees Celsius)</KM>
        <KM evidence="3">2.2 mM for ammonia (at 50 degrees Celsius)</KM>
        <text evidence="3">kcat is 13 sec(-1) for oxidative deamination of L-glutamate, and 95 sec(-1) for reductive amination of 2-oxoglutarate (at 50 degrees Celsius).</text>
    </kinetics>
    <phDependence>
        <text evidence="3">Optimum pH is 9.5 for oxidative deamination, and 9.0 for reductive amination. Retains more than 80% of its activity after incubation for 30 minutes at pH 4.5-9.5.</text>
    </phDependence>
    <temperatureDependence>
        <text evidence="3">Optimum temperature is 90 degrees Celsius for oxidative deamination. Retains full activity after incubation for 10 minutes at temperatures up to 90 degrees Celsius.</text>
    </temperatureDependence>
</comment>
<comment type="subunit">
    <text evidence="3">Homohexamer.</text>
</comment>
<comment type="induction">
    <text evidence="3">Is constitutively expressed.</text>
</comment>
<comment type="similarity">
    <text evidence="5">Belongs to the Glu/Leu/Phe/Val dehydrogenases family.</text>
</comment>
<sequence length="421" mass="46610">MSQNGQFLEYTLQVIRRGVEMGGFPEDFYKLLSRPKRIIQVSIPVKMDNGSYEVFEGYRVQHNDALGPFKGGIRFHPEVTLADDIALAMLMTLKNSLAGLPYGGAKGAVRVDPRRLSRRELEELARGYARAVAPLIGEQLDIPAPDVGTDSQVMAWMVDEYSKLAGRNAPAVFTSKPPELWGNPVREYSTGFGVAVAAREVAKRLWGGIEGKTVAVHGAGNTGAWAAYWLEKMGAKVVAISDTRGTVVNKAGIPGEQILKVYMEKKRDKSATVLALEGEKIADSNASLYQDVDILVPAAIENVVREDNVGLVRARLVVEGANGPTTPGAERRLYERGVVVVPDILANAGGVIMSYLEWVENLQWLFWDEEETRRRLEAIMSNNVARVYARWEKEKSWTMRDAAVVTALERIYNAMKTRGWI</sequence>